<comment type="function">
    <text>Metallothioneins have a high content of cysteine residues that bind various heavy metals; these proteins are transcriptionally regulated by both heavy metals and glucocorticoids.</text>
</comment>
<comment type="subunit">
    <text evidence="1">Monomer.</text>
</comment>
<comment type="domain">
    <text>Class I metallothioneins contain 2 metal-binding domains: four divalent ions are chelated within cluster A of the alpha domain and are coordinated via cysteinyl thiolate bridges to 11 cysteine ligands. Cluster B, the corresponding region within the beta domain, can ligate three divalent ions to 9 cysteines.</text>
</comment>
<comment type="similarity">
    <text evidence="3">Belongs to the metallothionein superfamily. Type 1 family.</text>
</comment>
<proteinExistence type="inferred from homology"/>
<accession>P79376</accession>
<protein>
    <recommendedName>
        <fullName>Metallothionein-1C</fullName>
        <shortName>MT-1C</shortName>
    </recommendedName>
    <alternativeName>
        <fullName>Metallothionein-IC</fullName>
        <shortName>MT-IC</shortName>
    </alternativeName>
</protein>
<organism>
    <name type="scientific">Sus scrofa</name>
    <name type="common">Pig</name>
    <dbReference type="NCBI Taxonomy" id="9823"/>
    <lineage>
        <taxon>Eukaryota</taxon>
        <taxon>Metazoa</taxon>
        <taxon>Chordata</taxon>
        <taxon>Craniata</taxon>
        <taxon>Vertebrata</taxon>
        <taxon>Euteleostomi</taxon>
        <taxon>Mammalia</taxon>
        <taxon>Eutheria</taxon>
        <taxon>Laurasiatheria</taxon>
        <taxon>Artiodactyla</taxon>
        <taxon>Suina</taxon>
        <taxon>Suidae</taxon>
        <taxon>Sus</taxon>
    </lineage>
</organism>
<sequence length="61" mass="5959">MDPNCSCSTGGSCSCAGSCTCKACRCTSCKKSCCSCCPAGCARCAQGCICKGASDKCSCCA</sequence>
<reference key="1">
    <citation type="journal article" date="1998" name="Gene">
        <title>Multiple isoforms of metallothionein are expressed in the porcine liver.</title>
        <authorList>
            <person name="Huang M.-C."/>
            <person name="Pan P.K."/>
            <person name="Zheng T.F."/>
            <person name="Chen N.C."/>
            <person name="Peng J.Y."/>
            <person name="Huang P.C."/>
        </authorList>
    </citation>
    <scope>NUCLEOTIDE SEQUENCE [MRNA]</scope>
    <source>
        <tissue>Liver</tissue>
    </source>
</reference>
<feature type="chain" id="PRO_0000197209" description="Metallothionein-1C">
    <location>
        <begin position="1"/>
        <end position="61"/>
    </location>
</feature>
<feature type="region of interest" description="Beta">
    <location>
        <begin position="1"/>
        <end position="29"/>
    </location>
</feature>
<feature type="region of interest" description="Alpha">
    <location>
        <begin position="30"/>
        <end position="61"/>
    </location>
</feature>
<feature type="binding site" evidence="2">
    <location>
        <position position="5"/>
    </location>
    <ligand>
        <name>a divalent metal cation</name>
        <dbReference type="ChEBI" id="CHEBI:60240"/>
        <label>1</label>
        <note>in cluster B</note>
    </ligand>
</feature>
<feature type="binding site" evidence="2">
    <location>
        <position position="7"/>
    </location>
    <ligand>
        <name>a divalent metal cation</name>
        <dbReference type="ChEBI" id="CHEBI:60240"/>
        <label>1</label>
        <note>in cluster B</note>
    </ligand>
</feature>
<feature type="binding site" evidence="2">
    <location>
        <position position="7"/>
    </location>
    <ligand>
        <name>a divalent metal cation</name>
        <dbReference type="ChEBI" id="CHEBI:60240"/>
        <label>2</label>
        <note>in cluster B</note>
    </ligand>
</feature>
<feature type="binding site" evidence="2">
    <location>
        <position position="13"/>
    </location>
    <ligand>
        <name>a divalent metal cation</name>
        <dbReference type="ChEBI" id="CHEBI:60240"/>
        <label>2</label>
        <note>in cluster B</note>
    </ligand>
</feature>
<feature type="binding site" evidence="2">
    <location>
        <position position="15"/>
    </location>
    <ligand>
        <name>a divalent metal cation</name>
        <dbReference type="ChEBI" id="CHEBI:60240"/>
        <label>2</label>
        <note>in cluster B</note>
    </ligand>
</feature>
<feature type="binding site" evidence="2">
    <location>
        <position position="15"/>
    </location>
    <ligand>
        <name>a divalent metal cation</name>
        <dbReference type="ChEBI" id="CHEBI:60240"/>
        <label>3</label>
        <note>in cluster B</note>
    </ligand>
</feature>
<feature type="binding site" evidence="2">
    <location>
        <position position="19"/>
    </location>
    <ligand>
        <name>a divalent metal cation</name>
        <dbReference type="ChEBI" id="CHEBI:60240"/>
        <label>3</label>
        <note>in cluster B</note>
    </ligand>
</feature>
<feature type="binding site" evidence="2">
    <location>
        <position position="21"/>
    </location>
    <ligand>
        <name>a divalent metal cation</name>
        <dbReference type="ChEBI" id="CHEBI:60240"/>
        <label>1</label>
        <note>in cluster B</note>
    </ligand>
</feature>
<feature type="binding site" evidence="2">
    <location>
        <position position="24"/>
    </location>
    <ligand>
        <name>a divalent metal cation</name>
        <dbReference type="ChEBI" id="CHEBI:60240"/>
        <label>1</label>
        <note>in cluster B</note>
    </ligand>
</feature>
<feature type="binding site" evidence="2">
    <location>
        <position position="24"/>
    </location>
    <ligand>
        <name>a divalent metal cation</name>
        <dbReference type="ChEBI" id="CHEBI:60240"/>
        <label>3</label>
        <note>in cluster B</note>
    </ligand>
</feature>
<feature type="binding site" evidence="2">
    <location>
        <position position="26"/>
    </location>
    <ligand>
        <name>a divalent metal cation</name>
        <dbReference type="ChEBI" id="CHEBI:60240"/>
        <label>2</label>
        <note>in cluster B</note>
    </ligand>
</feature>
<feature type="binding site" evidence="2">
    <location>
        <position position="29"/>
    </location>
    <ligand>
        <name>a divalent metal cation</name>
        <dbReference type="ChEBI" id="CHEBI:60240"/>
        <label>3</label>
        <note>in cluster B</note>
    </ligand>
</feature>
<feature type="binding site" evidence="2">
    <location>
        <position position="33"/>
    </location>
    <ligand>
        <name>a divalent metal cation</name>
        <dbReference type="ChEBI" id="CHEBI:60240"/>
        <label>4</label>
        <note>in cluster A</note>
    </ligand>
</feature>
<feature type="binding site" evidence="2">
    <location>
        <position position="34"/>
    </location>
    <ligand>
        <name>a divalent metal cation</name>
        <dbReference type="ChEBI" id="CHEBI:60240"/>
        <label>4</label>
        <note>in cluster A</note>
    </ligand>
</feature>
<feature type="binding site" evidence="2">
    <location>
        <position position="34"/>
    </location>
    <ligand>
        <name>a divalent metal cation</name>
        <dbReference type="ChEBI" id="CHEBI:60240"/>
        <label>5</label>
        <note>in cluster A</note>
    </ligand>
</feature>
<feature type="binding site" evidence="2">
    <location>
        <position position="36"/>
    </location>
    <ligand>
        <name>a divalent metal cation</name>
        <dbReference type="ChEBI" id="CHEBI:60240"/>
        <label>5</label>
        <note>in cluster A</note>
    </ligand>
</feature>
<feature type="binding site" evidence="2">
    <location>
        <position position="37"/>
    </location>
    <ligand>
        <name>a divalent metal cation</name>
        <dbReference type="ChEBI" id="CHEBI:60240"/>
        <label>5</label>
        <note>in cluster A</note>
    </ligand>
</feature>
<feature type="binding site" evidence="2">
    <location>
        <position position="37"/>
    </location>
    <ligand>
        <name>a divalent metal cation</name>
        <dbReference type="ChEBI" id="CHEBI:60240"/>
        <label>6</label>
        <note>in cluster A</note>
    </ligand>
</feature>
<feature type="binding site" evidence="2">
    <location>
        <position position="41"/>
    </location>
    <ligand>
        <name>a divalent metal cation</name>
        <dbReference type="ChEBI" id="CHEBI:60240"/>
        <label>6</label>
        <note>in cluster A</note>
    </ligand>
</feature>
<feature type="binding site" evidence="2">
    <location>
        <position position="44"/>
    </location>
    <ligand>
        <name>a divalent metal cation</name>
        <dbReference type="ChEBI" id="CHEBI:60240"/>
        <label>4</label>
        <note>in cluster A</note>
    </ligand>
</feature>
<feature type="binding site" evidence="2">
    <location>
        <position position="44"/>
    </location>
    <ligand>
        <name>a divalent metal cation</name>
        <dbReference type="ChEBI" id="CHEBI:60240"/>
        <label>6</label>
        <note>in cluster A</note>
    </ligand>
</feature>
<feature type="binding site" evidence="2">
    <location>
        <position position="48"/>
    </location>
    <ligand>
        <name>a divalent metal cation</name>
        <dbReference type="ChEBI" id="CHEBI:60240"/>
        <label>4</label>
        <note>in cluster A</note>
    </ligand>
</feature>
<feature type="binding site" evidence="2">
    <location>
        <position position="50"/>
    </location>
    <ligand>
        <name>a divalent metal cation</name>
        <dbReference type="ChEBI" id="CHEBI:60240"/>
        <label>5</label>
        <note>in cluster A</note>
    </ligand>
</feature>
<feature type="binding site" evidence="2">
    <location>
        <position position="50"/>
    </location>
    <ligand>
        <name>a divalent metal cation</name>
        <dbReference type="ChEBI" id="CHEBI:60240"/>
        <label>7</label>
        <note>in cluster A</note>
    </ligand>
</feature>
<feature type="binding site" evidence="2">
    <location>
        <position position="57"/>
    </location>
    <ligand>
        <name>a divalent metal cation</name>
        <dbReference type="ChEBI" id="CHEBI:60240"/>
        <label>7</label>
        <note>in cluster A</note>
    </ligand>
</feature>
<feature type="binding site" evidence="2">
    <location>
        <position position="59"/>
    </location>
    <ligand>
        <name>a divalent metal cation</name>
        <dbReference type="ChEBI" id="CHEBI:60240"/>
        <label>7</label>
        <note>in cluster A</note>
    </ligand>
</feature>
<feature type="binding site" evidence="2">
    <location>
        <position position="60"/>
    </location>
    <ligand>
        <name>a divalent metal cation</name>
        <dbReference type="ChEBI" id="CHEBI:60240"/>
        <label>6</label>
        <note>in cluster A</note>
    </ligand>
</feature>
<feature type="binding site" evidence="2">
    <location>
        <position position="60"/>
    </location>
    <ligand>
        <name>a divalent metal cation</name>
        <dbReference type="ChEBI" id="CHEBI:60240"/>
        <label>7</label>
        <note>in cluster A</note>
    </ligand>
</feature>
<gene>
    <name type="primary">MT1C</name>
</gene>
<name>MT1C_PIG</name>
<evidence type="ECO:0000250" key="1"/>
<evidence type="ECO:0000250" key="2">
    <source>
        <dbReference type="UniProtKB" id="P02795"/>
    </source>
</evidence>
<evidence type="ECO:0000305" key="3"/>
<dbReference type="EMBL" id="AB000788">
    <property type="protein sequence ID" value="BAA19178.1"/>
    <property type="molecule type" value="mRNA"/>
</dbReference>
<dbReference type="SMR" id="P79376"/>
<dbReference type="FunCoup" id="P79376">
    <property type="interactions" value="153"/>
</dbReference>
<dbReference type="STRING" id="9823.ENSSSCP00000032811"/>
<dbReference type="PaxDb" id="9823-ENSSSCP00000019723"/>
<dbReference type="Ensembl" id="ENSSSCT00015013562.1">
    <property type="protein sequence ID" value="ENSSSCP00015005260.1"/>
    <property type="gene ID" value="ENSSSCG00015010287.1"/>
</dbReference>
<dbReference type="Ensembl" id="ENSSSCT00015013616.1">
    <property type="protein sequence ID" value="ENSSSCP00015005285.1"/>
    <property type="gene ID" value="ENSSSCG00015010287.1"/>
</dbReference>
<dbReference type="Ensembl" id="ENSSSCT00015013720.1">
    <property type="protein sequence ID" value="ENSSSCP00015005322.1"/>
    <property type="gene ID" value="ENSSSCG00015010287.1"/>
</dbReference>
<dbReference type="Ensembl" id="ENSSSCT00040036175.1">
    <property type="protein sequence ID" value="ENSSSCP00040015003.1"/>
    <property type="gene ID" value="ENSSSCG00040027068.1"/>
</dbReference>
<dbReference type="Ensembl" id="ENSSSCT00060100865.1">
    <property type="protein sequence ID" value="ENSSSCP00060043822.1"/>
    <property type="gene ID" value="ENSSSCG00060073787.1"/>
</dbReference>
<dbReference type="InParanoid" id="P79376"/>
<dbReference type="Reactome" id="R-SSC-5661231">
    <property type="pathway name" value="Metallothioneins bind metals"/>
</dbReference>
<dbReference type="Proteomes" id="UP000008227">
    <property type="component" value="Unplaced"/>
</dbReference>
<dbReference type="Proteomes" id="UP000314985">
    <property type="component" value="Unplaced"/>
</dbReference>
<dbReference type="Proteomes" id="UP000694570">
    <property type="component" value="Unplaced"/>
</dbReference>
<dbReference type="Proteomes" id="UP000694571">
    <property type="component" value="Unplaced"/>
</dbReference>
<dbReference type="Proteomes" id="UP000694720">
    <property type="component" value="Unplaced"/>
</dbReference>
<dbReference type="Proteomes" id="UP000694722">
    <property type="component" value="Unplaced"/>
</dbReference>
<dbReference type="Proteomes" id="UP000694723">
    <property type="component" value="Unplaced"/>
</dbReference>
<dbReference type="Proteomes" id="UP000694724">
    <property type="component" value="Unplaced"/>
</dbReference>
<dbReference type="Proteomes" id="UP000694725">
    <property type="component" value="Unplaced"/>
</dbReference>
<dbReference type="Proteomes" id="UP000694726">
    <property type="component" value="Unplaced"/>
</dbReference>
<dbReference type="Proteomes" id="UP000694727">
    <property type="component" value="Unplaced"/>
</dbReference>
<dbReference type="Proteomes" id="UP000694728">
    <property type="component" value="Unplaced"/>
</dbReference>
<dbReference type="GO" id="GO:0005737">
    <property type="term" value="C:cytoplasm"/>
    <property type="evidence" value="ECO:0000250"/>
    <property type="project" value="UniProtKB"/>
</dbReference>
<dbReference type="GO" id="GO:0005634">
    <property type="term" value="C:nucleus"/>
    <property type="evidence" value="ECO:0000250"/>
    <property type="project" value="UniProtKB"/>
</dbReference>
<dbReference type="GO" id="GO:0046872">
    <property type="term" value="F:metal ion binding"/>
    <property type="evidence" value="ECO:0000318"/>
    <property type="project" value="GO_Central"/>
</dbReference>
<dbReference type="GO" id="GO:0008270">
    <property type="term" value="F:zinc ion binding"/>
    <property type="evidence" value="ECO:0000250"/>
    <property type="project" value="UniProtKB"/>
</dbReference>
<dbReference type="GO" id="GO:0071276">
    <property type="term" value="P:cellular response to cadmium ion"/>
    <property type="evidence" value="ECO:0000318"/>
    <property type="project" value="GO_Central"/>
</dbReference>
<dbReference type="GO" id="GO:0071280">
    <property type="term" value="P:cellular response to copper ion"/>
    <property type="evidence" value="ECO:0000318"/>
    <property type="project" value="GO_Central"/>
</dbReference>
<dbReference type="GO" id="GO:0071294">
    <property type="term" value="P:cellular response to zinc ion"/>
    <property type="evidence" value="ECO:0000250"/>
    <property type="project" value="UniProtKB"/>
</dbReference>
<dbReference type="GO" id="GO:0010273">
    <property type="term" value="P:detoxification of copper ion"/>
    <property type="evidence" value="ECO:0000318"/>
    <property type="project" value="GO_Central"/>
</dbReference>
<dbReference type="GO" id="GO:0006882">
    <property type="term" value="P:intracellular zinc ion homeostasis"/>
    <property type="evidence" value="ECO:0000318"/>
    <property type="project" value="GO_Central"/>
</dbReference>
<dbReference type="GO" id="GO:0045926">
    <property type="term" value="P:negative regulation of growth"/>
    <property type="evidence" value="ECO:0000250"/>
    <property type="project" value="UniProtKB"/>
</dbReference>
<dbReference type="FunFam" id="4.10.10.10:FF:000001">
    <property type="entry name" value="Metallothionein"/>
    <property type="match status" value="1"/>
</dbReference>
<dbReference type="Gene3D" id="4.10.10.10">
    <property type="entry name" value="Metallothionein Isoform II"/>
    <property type="match status" value="1"/>
</dbReference>
<dbReference type="InterPro" id="IPR017854">
    <property type="entry name" value="Metalthion_dom_sf"/>
</dbReference>
<dbReference type="InterPro" id="IPR023587">
    <property type="entry name" value="Metalthion_dom_sf_vert"/>
</dbReference>
<dbReference type="InterPro" id="IPR000006">
    <property type="entry name" value="Metalthion_vert"/>
</dbReference>
<dbReference type="InterPro" id="IPR018064">
    <property type="entry name" value="Metalthion_vert_metal_BS"/>
</dbReference>
<dbReference type="PANTHER" id="PTHR23299">
    <property type="entry name" value="METALLOTHIONEIN"/>
    <property type="match status" value="1"/>
</dbReference>
<dbReference type="PANTHER" id="PTHR23299:SF22">
    <property type="entry name" value="METALLOTHIONEIN-1G"/>
    <property type="match status" value="1"/>
</dbReference>
<dbReference type="Pfam" id="PF00131">
    <property type="entry name" value="Metallothio"/>
    <property type="match status" value="1"/>
</dbReference>
<dbReference type="PRINTS" id="PR00860">
    <property type="entry name" value="MTVERTEBRATE"/>
</dbReference>
<dbReference type="SUPFAM" id="SSF57868">
    <property type="entry name" value="Metallothionein"/>
    <property type="match status" value="1"/>
</dbReference>
<dbReference type="PROSITE" id="PS00203">
    <property type="entry name" value="METALLOTHIONEIN_VRT"/>
    <property type="match status" value="1"/>
</dbReference>
<keyword id="KW-0479">Metal-binding</keyword>
<keyword id="KW-0480">Metal-thiolate cluster</keyword>
<keyword id="KW-1185">Reference proteome</keyword>